<keyword id="KW-0007">Acetylation</keyword>
<keyword id="KW-0012">Acyltransferase</keyword>
<keyword id="KW-0025">Alternative splicing</keyword>
<keyword id="KW-0256">Endoplasmic reticulum</keyword>
<keyword id="KW-0444">Lipid biosynthesis</keyword>
<keyword id="KW-0443">Lipid metabolism</keyword>
<keyword id="KW-0472">Membrane</keyword>
<keyword id="KW-0594">Phospholipid biosynthesis</keyword>
<keyword id="KW-1208">Phospholipid metabolism</keyword>
<keyword id="KW-1267">Proteomics identification</keyword>
<keyword id="KW-1185">Reference proteome</keyword>
<keyword id="KW-0808">Transferase</keyword>
<keyword id="KW-0812">Transmembrane</keyword>
<keyword id="KW-1133">Transmembrane helix</keyword>
<accession>Q6P1A2</accession>
<accession>B2RDH0</accession>
<accession>B7Z3N3</accession>
<accession>Q7KZS1</accession>
<accession>Q92980</accession>
<accession>Q9BW40</accession>
<organism>
    <name type="scientific">Homo sapiens</name>
    <name type="common">Human</name>
    <dbReference type="NCBI Taxonomy" id="9606"/>
    <lineage>
        <taxon>Eukaryota</taxon>
        <taxon>Metazoa</taxon>
        <taxon>Chordata</taxon>
        <taxon>Craniata</taxon>
        <taxon>Vertebrata</taxon>
        <taxon>Euteleostomi</taxon>
        <taxon>Mammalia</taxon>
        <taxon>Eutheria</taxon>
        <taxon>Euarchontoglires</taxon>
        <taxon>Primates</taxon>
        <taxon>Haplorrhini</taxon>
        <taxon>Catarrhini</taxon>
        <taxon>Hominidae</taxon>
        <taxon>Homo</taxon>
    </lineage>
</organism>
<protein>
    <recommendedName>
        <fullName>Lysophospholipid acyltransferase 5</fullName>
        <shortName>LPLAT 5</shortName>
        <ecNumber evidence="4 5 6">2.3.1.-</ecNumber>
    </recommendedName>
    <alternativeName>
        <fullName>1-acylglycerophosphocholine O-acyltransferase</fullName>
        <ecNumber evidence="4 5 6">2.3.1.23</ecNumber>
    </alternativeName>
    <alternativeName>
        <fullName>1-acylglycerophosphoethanolamine O-acyltransferase</fullName>
        <ecNumber evidence="5 6">2.3.1.n7</ecNumber>
    </alternativeName>
    <alternativeName>
        <fullName>1-acylglycerophosphoserine O-acyltransferase</fullName>
        <ecNumber evidence="4 5 6">2.3.1.n6</ecNumber>
    </alternativeName>
    <alternativeName>
        <fullName>Lysophosphatidylcholine acyltransferase</fullName>
        <shortName>LPCAT</shortName>
        <shortName>Lyso-PC acyltransferase</shortName>
    </alternativeName>
    <alternativeName>
        <fullName>Lysophosphatidylcholine acyltransferase 3</fullName>
        <shortName>Lyso-PC acyltransferase 3</shortName>
    </alternativeName>
    <alternativeName>
        <fullName>Lysophosphatidylserine acyltransferase</fullName>
        <shortName>LPSAT</shortName>
        <shortName>Lyso-PS acyltransferase</shortName>
    </alternativeName>
    <alternativeName>
        <fullName>Membrane-bound O-acyltransferase domain-containing protein 5</fullName>
        <shortName>O-acyltransferase domain-containing protein 5</shortName>
    </alternativeName>
</protein>
<proteinExistence type="evidence at protein level"/>
<name>MBOA5_HUMAN</name>
<reference key="1">
    <citation type="journal article" date="2007" name="BMC Genomics">
        <title>The full-ORF clone resource of the German cDNA consortium.</title>
        <authorList>
            <person name="Bechtel S."/>
            <person name="Rosenfelder H."/>
            <person name="Duda A."/>
            <person name="Schmidt C.P."/>
            <person name="Ernst U."/>
            <person name="Wellenreuther R."/>
            <person name="Mehrle A."/>
            <person name="Schuster C."/>
            <person name="Bahr A."/>
            <person name="Bloecker H."/>
            <person name="Heubner D."/>
            <person name="Hoerlein A."/>
            <person name="Michel G."/>
            <person name="Wedler H."/>
            <person name="Koehrer K."/>
            <person name="Ottenwaelder B."/>
            <person name="Poustka A."/>
            <person name="Wiemann S."/>
            <person name="Schupp I."/>
        </authorList>
    </citation>
    <scope>NUCLEOTIDE SEQUENCE [LARGE SCALE MRNA] (ISOFORM 1)</scope>
    <source>
        <tissue>Endometrium</tissue>
    </source>
</reference>
<reference key="2">
    <citation type="journal article" date="2004" name="Nat. Genet.">
        <title>Complete sequencing and characterization of 21,243 full-length human cDNAs.</title>
        <authorList>
            <person name="Ota T."/>
            <person name="Suzuki Y."/>
            <person name="Nishikawa T."/>
            <person name="Otsuki T."/>
            <person name="Sugiyama T."/>
            <person name="Irie R."/>
            <person name="Wakamatsu A."/>
            <person name="Hayashi K."/>
            <person name="Sato H."/>
            <person name="Nagai K."/>
            <person name="Kimura K."/>
            <person name="Makita H."/>
            <person name="Sekine M."/>
            <person name="Obayashi M."/>
            <person name="Nishi T."/>
            <person name="Shibahara T."/>
            <person name="Tanaka T."/>
            <person name="Ishii S."/>
            <person name="Yamamoto J."/>
            <person name="Saito K."/>
            <person name="Kawai Y."/>
            <person name="Isono Y."/>
            <person name="Nakamura Y."/>
            <person name="Nagahari K."/>
            <person name="Murakami K."/>
            <person name="Yasuda T."/>
            <person name="Iwayanagi T."/>
            <person name="Wagatsuma M."/>
            <person name="Shiratori A."/>
            <person name="Sudo H."/>
            <person name="Hosoiri T."/>
            <person name="Kaku Y."/>
            <person name="Kodaira H."/>
            <person name="Kondo H."/>
            <person name="Sugawara M."/>
            <person name="Takahashi M."/>
            <person name="Kanda K."/>
            <person name="Yokoi T."/>
            <person name="Furuya T."/>
            <person name="Kikkawa E."/>
            <person name="Omura Y."/>
            <person name="Abe K."/>
            <person name="Kamihara K."/>
            <person name="Katsuta N."/>
            <person name="Sato K."/>
            <person name="Tanikawa M."/>
            <person name="Yamazaki M."/>
            <person name="Ninomiya K."/>
            <person name="Ishibashi T."/>
            <person name="Yamashita H."/>
            <person name="Murakawa K."/>
            <person name="Fujimori K."/>
            <person name="Tanai H."/>
            <person name="Kimata M."/>
            <person name="Watanabe M."/>
            <person name="Hiraoka S."/>
            <person name="Chiba Y."/>
            <person name="Ishida S."/>
            <person name="Ono Y."/>
            <person name="Takiguchi S."/>
            <person name="Watanabe S."/>
            <person name="Yosida M."/>
            <person name="Hotuta T."/>
            <person name="Kusano J."/>
            <person name="Kanehori K."/>
            <person name="Takahashi-Fujii A."/>
            <person name="Hara H."/>
            <person name="Tanase T.-O."/>
            <person name="Nomura Y."/>
            <person name="Togiya S."/>
            <person name="Komai F."/>
            <person name="Hara R."/>
            <person name="Takeuchi K."/>
            <person name="Arita M."/>
            <person name="Imose N."/>
            <person name="Musashino K."/>
            <person name="Yuuki H."/>
            <person name="Oshima A."/>
            <person name="Sasaki N."/>
            <person name="Aotsuka S."/>
            <person name="Yoshikawa Y."/>
            <person name="Matsunawa H."/>
            <person name="Ichihara T."/>
            <person name="Shiohata N."/>
            <person name="Sano S."/>
            <person name="Moriya S."/>
            <person name="Momiyama H."/>
            <person name="Satoh N."/>
            <person name="Takami S."/>
            <person name="Terashima Y."/>
            <person name="Suzuki O."/>
            <person name="Nakagawa S."/>
            <person name="Senoh A."/>
            <person name="Mizoguchi H."/>
            <person name="Goto Y."/>
            <person name="Shimizu F."/>
            <person name="Wakebe H."/>
            <person name="Hishigaki H."/>
            <person name="Watanabe T."/>
            <person name="Sugiyama A."/>
            <person name="Takemoto M."/>
            <person name="Kawakami B."/>
            <person name="Yamazaki M."/>
            <person name="Watanabe K."/>
            <person name="Kumagai A."/>
            <person name="Itakura S."/>
            <person name="Fukuzumi Y."/>
            <person name="Fujimori Y."/>
            <person name="Komiyama M."/>
            <person name="Tashiro H."/>
            <person name="Tanigami A."/>
            <person name="Fujiwara T."/>
            <person name="Ono T."/>
            <person name="Yamada K."/>
            <person name="Fujii Y."/>
            <person name="Ozaki K."/>
            <person name="Hirao M."/>
            <person name="Ohmori Y."/>
            <person name="Kawabata A."/>
            <person name="Hikiji T."/>
            <person name="Kobatake N."/>
            <person name="Inagaki H."/>
            <person name="Ikema Y."/>
            <person name="Okamoto S."/>
            <person name="Okitani R."/>
            <person name="Kawakami T."/>
            <person name="Noguchi S."/>
            <person name="Itoh T."/>
            <person name="Shigeta K."/>
            <person name="Senba T."/>
            <person name="Matsumura K."/>
            <person name="Nakajima Y."/>
            <person name="Mizuno T."/>
            <person name="Morinaga M."/>
            <person name="Sasaki M."/>
            <person name="Togashi T."/>
            <person name="Oyama M."/>
            <person name="Hata H."/>
            <person name="Watanabe M."/>
            <person name="Komatsu T."/>
            <person name="Mizushima-Sugano J."/>
            <person name="Satoh T."/>
            <person name="Shirai Y."/>
            <person name="Takahashi Y."/>
            <person name="Nakagawa K."/>
            <person name="Okumura K."/>
            <person name="Nagase T."/>
            <person name="Nomura N."/>
            <person name="Kikuchi H."/>
            <person name="Masuho Y."/>
            <person name="Yamashita R."/>
            <person name="Nakai K."/>
            <person name="Yada T."/>
            <person name="Nakamura Y."/>
            <person name="Ohara O."/>
            <person name="Isogai T."/>
            <person name="Sugano S."/>
        </authorList>
    </citation>
    <scope>NUCLEOTIDE SEQUENCE [LARGE SCALE MRNA] (ISOFORM 2)</scope>
</reference>
<reference key="3">
    <citation type="journal article" date="2006" name="Nature">
        <title>The finished DNA sequence of human chromosome 12.</title>
        <authorList>
            <person name="Scherer S.E."/>
            <person name="Muzny D.M."/>
            <person name="Buhay C.J."/>
            <person name="Chen R."/>
            <person name="Cree A."/>
            <person name="Ding Y."/>
            <person name="Dugan-Rocha S."/>
            <person name="Gill R."/>
            <person name="Gunaratne P."/>
            <person name="Harris R.A."/>
            <person name="Hawes A.C."/>
            <person name="Hernandez J."/>
            <person name="Hodgson A.V."/>
            <person name="Hume J."/>
            <person name="Jackson A."/>
            <person name="Khan Z.M."/>
            <person name="Kovar-Smith C."/>
            <person name="Lewis L.R."/>
            <person name="Lozado R.J."/>
            <person name="Metzker M.L."/>
            <person name="Milosavljevic A."/>
            <person name="Miner G.R."/>
            <person name="Montgomery K.T."/>
            <person name="Morgan M.B."/>
            <person name="Nazareth L.V."/>
            <person name="Scott G."/>
            <person name="Sodergren E."/>
            <person name="Song X.-Z."/>
            <person name="Steffen D."/>
            <person name="Lovering R.C."/>
            <person name="Wheeler D.A."/>
            <person name="Worley K.C."/>
            <person name="Yuan Y."/>
            <person name="Zhang Z."/>
            <person name="Adams C.Q."/>
            <person name="Ansari-Lari M.A."/>
            <person name="Ayele M."/>
            <person name="Brown M.J."/>
            <person name="Chen G."/>
            <person name="Chen Z."/>
            <person name="Clerc-Blankenburg K.P."/>
            <person name="Davis C."/>
            <person name="Delgado O."/>
            <person name="Dinh H.H."/>
            <person name="Draper H."/>
            <person name="Gonzalez-Garay M.L."/>
            <person name="Havlak P."/>
            <person name="Jackson L.R."/>
            <person name="Jacob L.S."/>
            <person name="Kelly S.H."/>
            <person name="Li L."/>
            <person name="Li Z."/>
            <person name="Liu J."/>
            <person name="Liu W."/>
            <person name="Lu J."/>
            <person name="Maheshwari M."/>
            <person name="Nguyen B.-V."/>
            <person name="Okwuonu G.O."/>
            <person name="Pasternak S."/>
            <person name="Perez L.M."/>
            <person name="Plopper F.J.H."/>
            <person name="Santibanez J."/>
            <person name="Shen H."/>
            <person name="Tabor P.E."/>
            <person name="Verduzco D."/>
            <person name="Waldron L."/>
            <person name="Wang Q."/>
            <person name="Williams G.A."/>
            <person name="Zhang J."/>
            <person name="Zhou J."/>
            <person name="Allen C.C."/>
            <person name="Amin A.G."/>
            <person name="Anyalebechi V."/>
            <person name="Bailey M."/>
            <person name="Barbaria J.A."/>
            <person name="Bimage K.E."/>
            <person name="Bryant N.P."/>
            <person name="Burch P.E."/>
            <person name="Burkett C.E."/>
            <person name="Burrell K.L."/>
            <person name="Calderon E."/>
            <person name="Cardenas V."/>
            <person name="Carter K."/>
            <person name="Casias K."/>
            <person name="Cavazos I."/>
            <person name="Cavazos S.R."/>
            <person name="Ceasar H."/>
            <person name="Chacko J."/>
            <person name="Chan S.N."/>
            <person name="Chavez D."/>
            <person name="Christopoulos C."/>
            <person name="Chu J."/>
            <person name="Cockrell R."/>
            <person name="Cox C.D."/>
            <person name="Dang M."/>
            <person name="Dathorne S.R."/>
            <person name="David R."/>
            <person name="Davis C.M."/>
            <person name="Davy-Carroll L."/>
            <person name="Deshazo D.R."/>
            <person name="Donlin J.E."/>
            <person name="D'Souza L."/>
            <person name="Eaves K.A."/>
            <person name="Egan A."/>
            <person name="Emery-Cohen A.J."/>
            <person name="Escotto M."/>
            <person name="Flagg N."/>
            <person name="Forbes L.D."/>
            <person name="Gabisi A.M."/>
            <person name="Garza M."/>
            <person name="Hamilton C."/>
            <person name="Henderson N."/>
            <person name="Hernandez O."/>
            <person name="Hines S."/>
            <person name="Hogues M.E."/>
            <person name="Huang M."/>
            <person name="Idlebird D.G."/>
            <person name="Johnson R."/>
            <person name="Jolivet A."/>
            <person name="Jones S."/>
            <person name="Kagan R."/>
            <person name="King L.M."/>
            <person name="Leal B."/>
            <person name="Lebow H."/>
            <person name="Lee S."/>
            <person name="LeVan J.M."/>
            <person name="Lewis L.C."/>
            <person name="London P."/>
            <person name="Lorensuhewa L.M."/>
            <person name="Loulseged H."/>
            <person name="Lovett D.A."/>
            <person name="Lucier A."/>
            <person name="Lucier R.L."/>
            <person name="Ma J."/>
            <person name="Madu R.C."/>
            <person name="Mapua P."/>
            <person name="Martindale A.D."/>
            <person name="Martinez E."/>
            <person name="Massey E."/>
            <person name="Mawhiney S."/>
            <person name="Meador M.G."/>
            <person name="Mendez S."/>
            <person name="Mercado C."/>
            <person name="Mercado I.C."/>
            <person name="Merritt C.E."/>
            <person name="Miner Z.L."/>
            <person name="Minja E."/>
            <person name="Mitchell T."/>
            <person name="Mohabbat F."/>
            <person name="Mohabbat K."/>
            <person name="Montgomery B."/>
            <person name="Moore N."/>
            <person name="Morris S."/>
            <person name="Munidasa M."/>
            <person name="Ngo R.N."/>
            <person name="Nguyen N.B."/>
            <person name="Nickerson E."/>
            <person name="Nwaokelemeh O.O."/>
            <person name="Nwokenkwo S."/>
            <person name="Obregon M."/>
            <person name="Oguh M."/>
            <person name="Oragunye N."/>
            <person name="Oviedo R.J."/>
            <person name="Parish B.J."/>
            <person name="Parker D.N."/>
            <person name="Parrish J."/>
            <person name="Parks K.L."/>
            <person name="Paul H.A."/>
            <person name="Payton B.A."/>
            <person name="Perez A."/>
            <person name="Perrin W."/>
            <person name="Pickens A."/>
            <person name="Primus E.L."/>
            <person name="Pu L.-L."/>
            <person name="Puazo M."/>
            <person name="Quiles M.M."/>
            <person name="Quiroz J.B."/>
            <person name="Rabata D."/>
            <person name="Reeves K."/>
            <person name="Ruiz S.J."/>
            <person name="Shao H."/>
            <person name="Sisson I."/>
            <person name="Sonaike T."/>
            <person name="Sorelle R.P."/>
            <person name="Sutton A.E."/>
            <person name="Svatek A.F."/>
            <person name="Svetz L.A."/>
            <person name="Tamerisa K.S."/>
            <person name="Taylor T.R."/>
            <person name="Teague B."/>
            <person name="Thomas N."/>
            <person name="Thorn R.D."/>
            <person name="Trejos Z.Y."/>
            <person name="Trevino B.K."/>
            <person name="Ukegbu O.N."/>
            <person name="Urban J.B."/>
            <person name="Vasquez L.I."/>
            <person name="Vera V.A."/>
            <person name="Villasana D.M."/>
            <person name="Wang L."/>
            <person name="Ward-Moore S."/>
            <person name="Warren J.T."/>
            <person name="Wei X."/>
            <person name="White F."/>
            <person name="Williamson A.L."/>
            <person name="Wleczyk R."/>
            <person name="Wooden H.S."/>
            <person name="Wooden S.H."/>
            <person name="Yen J."/>
            <person name="Yoon L."/>
            <person name="Yoon V."/>
            <person name="Zorrilla S.E."/>
            <person name="Nelson D."/>
            <person name="Kucherlapati R."/>
            <person name="Weinstock G."/>
            <person name="Gibbs R.A."/>
        </authorList>
    </citation>
    <scope>NUCLEOTIDE SEQUENCE [LARGE SCALE GENOMIC DNA]</scope>
</reference>
<reference evidence="14" key="4">
    <citation type="journal article" date="2004" name="Genome Res.">
        <title>The status, quality, and expansion of the NIH full-length cDNA project: the Mammalian Gene Collection (MGC).</title>
        <authorList>
            <consortium name="The MGC Project Team"/>
        </authorList>
    </citation>
    <scope>NUCLEOTIDE SEQUENCE [LARGE SCALE MRNA] (ISOFORM 1)</scope>
    <source>
        <tissue evidence="13">Colon</tissue>
        <tissue evidence="14">Pancreas</tissue>
    </source>
</reference>
<reference evidence="8 12" key="5">
    <citation type="journal article" date="1997" name="Genome Res.">
        <title>Large-scale sequencing in human chromosome 12p13: experimental and computational gene structure determination.</title>
        <authorList>
            <person name="Ansari-Lari M.A."/>
            <person name="Shen Y."/>
            <person name="Muzny D.M."/>
            <person name="Lee W."/>
            <person name="Gibbs R.A."/>
        </authorList>
    </citation>
    <scope>NUCLEOTIDE SEQUENCE [GENOMIC DNA / MRNA] OF 50-487 (ISOFORM 1)</scope>
</reference>
<reference evidence="8 15" key="6">
    <citation type="submission" date="2003-05" db="EMBL/GenBank/DDBJ databases">
        <title>Cloning of human full-length CDSs in BD Creator(TM) system donor vector.</title>
        <authorList>
            <person name="Kalnine N."/>
            <person name="Chen X."/>
            <person name="Rolfs A."/>
            <person name="Halleck A."/>
            <person name="Hines L."/>
            <person name="Eisenstein S."/>
            <person name="Koundinya M."/>
            <person name="Raphael J."/>
            <person name="Moreira D."/>
            <person name="Kelley T."/>
            <person name="LaBaer J."/>
            <person name="Lin Y."/>
            <person name="Phelan M."/>
            <person name="Farmer A."/>
        </authorList>
    </citation>
    <scope>NUCLEOTIDE SEQUENCE [LARGE SCALE MRNA] OF 107-487 (ISOFORM 1/2)</scope>
</reference>
<reference key="7">
    <citation type="journal article" date="2008" name="Genes Cells">
        <title>Member of the membrane-bound O-acyltransferase (MBOAT) family encodes a lysophospholipid acyltransferase with broad substrate specificity.</title>
        <authorList>
            <person name="Matsuda S."/>
            <person name="Inoue T."/>
            <person name="Lee H.C."/>
            <person name="Kono N."/>
            <person name="Tanaka F."/>
            <person name="Gengyo-Ando K."/>
            <person name="Mitani S."/>
            <person name="Arai H."/>
        </authorList>
    </citation>
    <scope>FUNCTION</scope>
    <scope>CATALYTIC ACTIVITY</scope>
</reference>
<reference key="8">
    <citation type="journal article" date="2008" name="J. Biol. Chem.">
        <title>Identification and characterization of a major liver lysophosphatidylcholine acyltransferase.</title>
        <authorList>
            <person name="Zhao Y."/>
            <person name="Chen Y.Q."/>
            <person name="Bonacci T.M."/>
            <person name="Bredt D.S."/>
            <person name="Li S."/>
            <person name="Bensch W.R."/>
            <person name="Moller D.E."/>
            <person name="Kowala M."/>
            <person name="Konrad R.J."/>
            <person name="Cao G."/>
        </authorList>
    </citation>
    <scope>IDENTIFICATION</scope>
    <scope>FUNCTION</scope>
    <scope>CATALYTIC ACTIVITY</scope>
    <scope>SUBCELLULAR LOCATION</scope>
    <scope>BIOPHYSICOCHEMICAL PROPERTIES</scope>
    <scope>PATHWAY</scope>
    <scope>TISSUE SPECIFICITY</scope>
</reference>
<reference key="9">
    <citation type="journal article" date="2008" name="J. Biol. Chem.">
        <title>Lysophospholipid acyltransferases and arachidonate recycling in human neutrophils.</title>
        <authorList>
            <person name="Gijon M.A."/>
            <person name="Riekhof W.R."/>
            <person name="Zarini S."/>
            <person name="Murphy R.C."/>
            <person name="Voelker D.R."/>
        </authorList>
    </citation>
    <scope>FUNCTION</scope>
    <scope>CATALYTIC ACTIVITY</scope>
    <scope>ACTIVITY REGULATION</scope>
    <scope>TISSUE SPECIFICITY</scope>
    <scope>SUBSTRATE SPECIFICITY</scope>
</reference>
<reference key="10">
    <citation type="journal article" date="2015" name="Proteomics">
        <title>N-terminome analysis of the human mitochondrial proteome.</title>
        <authorList>
            <person name="Vaca Jacome A.S."/>
            <person name="Rabilloud T."/>
            <person name="Schaeffer-Reiss C."/>
            <person name="Rompais M."/>
            <person name="Ayoub D."/>
            <person name="Lane L."/>
            <person name="Bairoch A."/>
            <person name="Van Dorsselaer A."/>
            <person name="Carapito C."/>
        </authorList>
    </citation>
    <scope>ACETYLATION [LARGE SCALE ANALYSIS] AT ALA-2</scope>
    <scope>CLEAVAGE OF INITIATOR METHIONINE [LARGE SCALE ANALYSIS]</scope>
    <scope>IDENTIFICATION BY MASS SPECTROMETRY [LARGE SCALE ANALYSIS]</scope>
</reference>
<sequence>MASSAEGDEGTVVALAGVLQSGFQELSLNKLATSLGASEQALRLIISIFLGYPFALFYRHYLFYKETYLIHLFHTFTGLSIAYFNFGNQLYHSLLCIVLQFLILRLMGRTITAVLTTFCFQMAYLLAGYYYTATGNYDIKWTMPHCVLTLKLIGLAVDYFDGGKDQNSLSSEQQKYAIRGVPSLLEVAGFSYFYGAFLVGPQFSMNHYMKLVQGELIDIPGKIPNSIIPALKRLSLGLFYLVGYTLLSPHITEDYLLTEDYDNHPFWFRCMYMLIWGKFVLYKYVTCWLVTEGVCILTGLGFNGFEEKGKAKWDACANMKVWLFETNPRFTGTIASFNINTNAWVARYIFKRLKFLGNKELSQGLSLLFLALWHGLHSGYLVCFQMEFLIVIVERQAARLIQESPTLSKLAAITVLQPFYYLVQQTIHWLFMGYSMTAFCLFTWDKWLKVYKSIYFLGHIFFLSLLFILPYIHKAMVPRKEKLKKME</sequence>
<gene>
    <name type="primary">LPCAT3</name>
    <name type="synonym">MBOAT5</name>
    <name type="synonym">OACT5</name>
</gene>
<evidence type="ECO:0000250" key="1"/>
<evidence type="ECO:0000250" key="2">
    <source>
        <dbReference type="UniProtKB" id="Q91V01"/>
    </source>
</evidence>
<evidence type="ECO:0000255" key="3"/>
<evidence type="ECO:0000269" key="4">
    <source>
    </source>
</evidence>
<evidence type="ECO:0000269" key="5">
    <source>
    </source>
</evidence>
<evidence type="ECO:0000269" key="6">
    <source>
    </source>
</evidence>
<evidence type="ECO:0000303" key="7">
    <source>
    </source>
</evidence>
<evidence type="ECO:0000305" key="8"/>
<evidence type="ECO:0000305" key="9">
    <source>
    </source>
</evidence>
<evidence type="ECO:0000305" key="10">
    <source>
    </source>
</evidence>
<evidence type="ECO:0000305" key="11">
    <source>
    </source>
</evidence>
<evidence type="ECO:0000312" key="12">
    <source>
        <dbReference type="EMBL" id="AAC51640.1"/>
    </source>
</evidence>
<evidence type="ECO:0000312" key="13">
    <source>
        <dbReference type="EMBL" id="AAH00664.2"/>
    </source>
</evidence>
<evidence type="ECO:0000312" key="14">
    <source>
        <dbReference type="EMBL" id="AAH65194.1"/>
    </source>
</evidence>
<evidence type="ECO:0000312" key="15">
    <source>
        <dbReference type="EMBL" id="AAP35646.1"/>
    </source>
</evidence>
<evidence type="ECO:0007744" key="16">
    <source>
    </source>
</evidence>
<comment type="function">
    <text evidence="2 4 5 6">Lysophospholipid O-acyltransferase (LPLAT) that catalyzes the reacylation step of the phospholipid remodeling process also known as the Lands cycle (PubMed:18195019, PubMed:18772128, PubMed:18782225). Catalyzes transfer of the fatty acyl chain from fatty acyl-CoA to 1-acyl lysophospholipid to form various classes of phospholipids. Converts 1-acyl lysophosphatidylcholine (LPC) into phosphatidylcholine (PC) (LPCAT activity), 1-acyl lysophosphatidylserine (LPS) into phosphatidylserine (PS) (LPSAT activity) and 1-acyl lysophosphatidylethanolamine (LPE) into phosphatidylethanolamine (PE) (LPEAT activity) (PubMed:18195019, PubMed:18772128, PubMed:18782225). Favors polyunsaturated fatty acyl-CoAs as acyl donors compared to saturated fatty acyl-CoAs (PubMed:18195019, PubMed:18772128). Has higher activity for LPC acyl acceptors compared to LPEs and LPSs. Can also transfer the fatty acyl chain from fatty acyl-CoA to 1-O-alkyl lysophospholipid or 1-O-alkenyl lysophospholipid with lower efficiency (By similarity). Acts as a major LPC O-acyltransferase in liver and intestine. As a component of the liver X receptor/NR1H3 or NR1H2 signaling pathway, mainly catalyzes the incorporation of arachidonate into PCs of endoplasmic reticulum (ER) membranes, increasing membrane dynamics and enabling triacylglycerols transfer to nascent very low-density lipoprotein (VLDL) particles. Promotes processing of sterol regulatory protein SREBF1 in hepatocytes, likely by facilitating the translocation of SREBF1-SCAP complex from ER to the Golgi apparatus (By similarity). Participates in mechanisms by which the liver X receptor/NR1H3 or NR1H2 signaling pathway counteracts lipid-induced ER stress response and inflammation. Down-regulates hepatic inflammation by limiting arachidonic acid availability for synthesis of inflammatory eicosanoids, such as prostaglandins (By similarity). In enterocytes, acts as a component of a gut-brain feedback loop that coordinates dietary lipid absorption and food intake. Regulates the abundance of PCs containing linoleate and arachidonate in enterocyte membranes, enabling passive diffusion of fatty acids and cholesterol across the membrane for efficient chylomicron assembly (By similarity). In the intestinal crypt, acts as a component of dietary-responsive phospholipid-cholesterol axis, regulating the biosynthesis of cholesterol and its mitogenic effects on intestinal stem cells (By similarity).</text>
</comment>
<comment type="catalytic activity">
    <reaction evidence="4 5 6">
        <text>a 1-acyl-sn-glycero-3-phosphocholine + an acyl-CoA = a 1,2-diacyl-sn-glycero-3-phosphocholine + CoA</text>
        <dbReference type="Rhea" id="RHEA:12937"/>
        <dbReference type="ChEBI" id="CHEBI:57287"/>
        <dbReference type="ChEBI" id="CHEBI:57643"/>
        <dbReference type="ChEBI" id="CHEBI:58168"/>
        <dbReference type="ChEBI" id="CHEBI:58342"/>
        <dbReference type="EC" id="2.3.1.23"/>
    </reaction>
    <physiologicalReaction direction="left-to-right" evidence="9 10 11">
        <dbReference type="Rhea" id="RHEA:12938"/>
    </physiologicalReaction>
</comment>
<comment type="catalytic activity">
    <reaction evidence="5 6">
        <text>a 1-acyl-sn-glycero-3-phosphoethanolamine + an acyl-CoA = a 1,2-diacyl-sn-glycero-3-phosphoethanolamine + CoA</text>
        <dbReference type="Rhea" id="RHEA:32995"/>
        <dbReference type="ChEBI" id="CHEBI:57287"/>
        <dbReference type="ChEBI" id="CHEBI:58342"/>
        <dbReference type="ChEBI" id="CHEBI:64381"/>
        <dbReference type="ChEBI" id="CHEBI:64612"/>
        <dbReference type="EC" id="2.3.1.n7"/>
    </reaction>
    <physiologicalReaction direction="left-to-right" evidence="10 11">
        <dbReference type="Rhea" id="RHEA:32996"/>
    </physiologicalReaction>
</comment>
<comment type="catalytic activity">
    <reaction evidence="4 5 6">
        <text>a 1-acyl-sn-glycero-3-phospho-L-serine + an acyl-CoA = a 1,2-diacyl-sn-glycero-3-phospho-L-serine + CoA</text>
        <dbReference type="Rhea" id="RHEA:33191"/>
        <dbReference type="ChEBI" id="CHEBI:57262"/>
        <dbReference type="ChEBI" id="CHEBI:57287"/>
        <dbReference type="ChEBI" id="CHEBI:58342"/>
        <dbReference type="ChEBI" id="CHEBI:64379"/>
        <dbReference type="EC" id="2.3.1.n6"/>
    </reaction>
    <physiologicalReaction direction="left-to-right" evidence="9 10 11">
        <dbReference type="Rhea" id="RHEA:33192"/>
    </physiologicalReaction>
</comment>
<comment type="catalytic activity">
    <reaction evidence="6">
        <text>(9Z,12Z)-octadecadienoyl-CoA + a 1-acyl-sn-glycero-3-phosphocholine = 1-acyl-2-(9Z,12Z)-octadecadienoyl-sn-glycero-3-phosphocholine + CoA</text>
        <dbReference type="Rhea" id="RHEA:37563"/>
        <dbReference type="ChEBI" id="CHEBI:57287"/>
        <dbReference type="ChEBI" id="CHEBI:57383"/>
        <dbReference type="ChEBI" id="CHEBI:58168"/>
        <dbReference type="ChEBI" id="CHEBI:60000"/>
    </reaction>
    <physiologicalReaction direction="left-to-right" evidence="11">
        <dbReference type="Rhea" id="RHEA:37564"/>
    </physiologicalReaction>
</comment>
<comment type="catalytic activity">
    <reaction evidence="6">
        <text>(5Z,8Z,11Z,14Z)-eicosatetraenoyl-CoA + a 1-acyl-sn-glycero-3-phosphocholine = 1-acyl-2-(5Z,8Z,11Z,14Z-eicosatetraenoyl)-sn-glycero-3-phosphocholine + CoA</text>
        <dbReference type="Rhea" id="RHEA:37559"/>
        <dbReference type="ChEBI" id="CHEBI:57287"/>
        <dbReference type="ChEBI" id="CHEBI:57368"/>
        <dbReference type="ChEBI" id="CHEBI:58168"/>
        <dbReference type="ChEBI" id="CHEBI:75063"/>
    </reaction>
    <physiologicalReaction direction="left-to-right" evidence="11">
        <dbReference type="Rhea" id="RHEA:37560"/>
    </physiologicalReaction>
</comment>
<comment type="catalytic activity">
    <reaction evidence="4">
        <text>dodecanoyl-CoA + 1-hexadecanoyl-sn-glycero-3-phosphocholine = 1-hexadecanoyl-2-dodecanoyl-sn-glycero-3-phosphocholine + CoA</text>
        <dbReference type="Rhea" id="RHEA:37515"/>
        <dbReference type="ChEBI" id="CHEBI:57287"/>
        <dbReference type="ChEBI" id="CHEBI:57375"/>
        <dbReference type="ChEBI" id="CHEBI:72998"/>
        <dbReference type="ChEBI" id="CHEBI:75018"/>
    </reaction>
    <physiologicalReaction direction="left-to-right" evidence="9">
        <dbReference type="Rhea" id="RHEA:37516"/>
    </physiologicalReaction>
</comment>
<comment type="catalytic activity">
    <reaction evidence="4">
        <text>octadecanoyl-CoA + 1-hexadecanoyl-sn-glycero-3-phosphocholine = 1-hexadecanoyl-2-octadecanoyl-sn-glycero-3-phosphocholine + CoA</text>
        <dbReference type="Rhea" id="RHEA:35987"/>
        <dbReference type="ChEBI" id="CHEBI:57287"/>
        <dbReference type="ChEBI" id="CHEBI:57394"/>
        <dbReference type="ChEBI" id="CHEBI:72998"/>
        <dbReference type="ChEBI" id="CHEBI:73000"/>
    </reaction>
    <physiologicalReaction direction="left-to-right" evidence="9">
        <dbReference type="Rhea" id="RHEA:35988"/>
    </physiologicalReaction>
</comment>
<comment type="catalytic activity">
    <reaction evidence="4">
        <text>1-dodecanoyl-sn-glycero-3-phosphocholine + hexadecanoyl-CoA = 1-dodecanoyl-2-hexadecanoyl-sn-glycero-3-phosphocholine + CoA</text>
        <dbReference type="Rhea" id="RHEA:37511"/>
        <dbReference type="ChEBI" id="CHEBI:57287"/>
        <dbReference type="ChEBI" id="CHEBI:57379"/>
        <dbReference type="ChEBI" id="CHEBI:74966"/>
        <dbReference type="ChEBI" id="CHEBI:75017"/>
    </reaction>
    <physiologicalReaction direction="left-to-right" evidence="9">
        <dbReference type="Rhea" id="RHEA:37512"/>
    </physiologicalReaction>
</comment>
<comment type="catalytic activity">
    <reaction evidence="4">
        <text>1-tetradecanoyl-sn-glycero-3-phosphocholine + hexadecanoyl-CoA = 1-tetradecanoyl-2-hexadecanoyl-sn-glycero-3-phosphocholine + CoA</text>
        <dbReference type="Rhea" id="RHEA:37655"/>
        <dbReference type="ChEBI" id="CHEBI:57287"/>
        <dbReference type="ChEBI" id="CHEBI:57379"/>
        <dbReference type="ChEBI" id="CHEBI:64489"/>
        <dbReference type="ChEBI" id="CHEBI:75062"/>
    </reaction>
    <physiologicalReaction direction="left-to-right" evidence="9">
        <dbReference type="Rhea" id="RHEA:37656"/>
    </physiologicalReaction>
</comment>
<comment type="catalytic activity">
    <reaction evidence="4">
        <text>1-hexadecanoyl-sn-glycero-3-phosphocholine + hexadecanoyl-CoA = 1,2-dihexadecanoyl-sn-glycero-3-phosphocholine + CoA</text>
        <dbReference type="Rhea" id="RHEA:35983"/>
        <dbReference type="ChEBI" id="CHEBI:57287"/>
        <dbReference type="ChEBI" id="CHEBI:57379"/>
        <dbReference type="ChEBI" id="CHEBI:72998"/>
        <dbReference type="ChEBI" id="CHEBI:72999"/>
    </reaction>
    <physiologicalReaction direction="left-to-right" evidence="9">
        <dbReference type="Rhea" id="RHEA:35984"/>
    </physiologicalReaction>
</comment>
<comment type="catalytic activity">
    <reaction evidence="4">
        <text>1-octadecanoyl-sn-glycero-3-phosphocholine + hexadecanoyl-CoA = 1-octadecanoyl-2-hexadecanoyl-sn-glycero-3-phosphocholine + CoA</text>
        <dbReference type="Rhea" id="RHEA:37527"/>
        <dbReference type="ChEBI" id="CHEBI:57287"/>
        <dbReference type="ChEBI" id="CHEBI:57379"/>
        <dbReference type="ChEBI" id="CHEBI:73858"/>
        <dbReference type="ChEBI" id="CHEBI:75026"/>
    </reaction>
    <physiologicalReaction direction="left-to-right" evidence="9">
        <dbReference type="Rhea" id="RHEA:37528"/>
    </physiologicalReaction>
</comment>
<comment type="catalytic activity">
    <reaction evidence="4 5">
        <text>1-(9Z-octadecenoyl)-sn-glycero-3-phosphocholine + hexadecanoyl-CoA = 1-(9Z-octadecenoyl)-2-hexadecanoyl-sn-glycero-3-phosphocholine + CoA</text>
        <dbReference type="Rhea" id="RHEA:37383"/>
        <dbReference type="ChEBI" id="CHEBI:28610"/>
        <dbReference type="ChEBI" id="CHEBI:57287"/>
        <dbReference type="ChEBI" id="CHEBI:57379"/>
        <dbReference type="ChEBI" id="CHEBI:74667"/>
    </reaction>
    <physiologicalReaction direction="left-to-right" evidence="9 10">
        <dbReference type="Rhea" id="RHEA:37384"/>
    </physiologicalReaction>
</comment>
<comment type="catalytic activity">
    <reaction evidence="5">
        <text>(9Z)-hexadecenoyl-CoA + 1-hexadecanoyl-sn-glycero-3-phosphocholine = 1-hexadecanoyl-2-(9Z-hexadecenoyl)-sn-glycero-3-phosphocholine + CoA</text>
        <dbReference type="Rhea" id="RHEA:37207"/>
        <dbReference type="ChEBI" id="CHEBI:57287"/>
        <dbReference type="ChEBI" id="CHEBI:61540"/>
        <dbReference type="ChEBI" id="CHEBI:72998"/>
        <dbReference type="ChEBI" id="CHEBI:74000"/>
    </reaction>
    <physiologicalReaction direction="left-to-right" evidence="10">
        <dbReference type="Rhea" id="RHEA:37208"/>
    </physiologicalReaction>
</comment>
<comment type="catalytic activity">
    <reaction evidence="4 5">
        <text>1-hexadecanoyl-sn-glycero-3-phosphocholine + (9Z)-octadecenoyl-CoA = 1-hexadecanoyl-2-(9Z-octadecenoyl)-sn-glycero-3-phosphocholine + CoA</text>
        <dbReference type="Rhea" id="RHEA:35991"/>
        <dbReference type="ChEBI" id="CHEBI:57287"/>
        <dbReference type="ChEBI" id="CHEBI:57387"/>
        <dbReference type="ChEBI" id="CHEBI:72998"/>
        <dbReference type="ChEBI" id="CHEBI:73001"/>
    </reaction>
    <physiologicalReaction direction="left-to-right" evidence="9 10">
        <dbReference type="Rhea" id="RHEA:35992"/>
    </physiologicalReaction>
</comment>
<comment type="catalytic activity">
    <reaction evidence="4 5">
        <text>(9Z,12Z)-octadecadienoyl-CoA + 1-hexadecanoyl-sn-glycero-3-phosphocholine = 1-hexadecanoyl-2-(9Z,12Z-octadecadienoyl)-sn-glycero-3-phosphocholine + CoA</text>
        <dbReference type="Rhea" id="RHEA:35995"/>
        <dbReference type="ChEBI" id="CHEBI:57287"/>
        <dbReference type="ChEBI" id="CHEBI:57383"/>
        <dbReference type="ChEBI" id="CHEBI:72998"/>
        <dbReference type="ChEBI" id="CHEBI:73002"/>
    </reaction>
    <physiologicalReaction direction="left-to-right" evidence="9 10">
        <dbReference type="Rhea" id="RHEA:35996"/>
    </physiologicalReaction>
</comment>
<comment type="catalytic activity">
    <reaction evidence="2">
        <text>1-dodecanoyl-sn-glycero-3-phosphocholine + (5Z,8Z,11Z,14Z)-eicosatetraenoyl-CoA = 1-dodecanoyl-2-(5Z,8Z,11Z,14Z)-eicosatetraenoyl-sn-glycero-3-phosphocholine + CoA</text>
        <dbReference type="Rhea" id="RHEA:37483"/>
        <dbReference type="ChEBI" id="CHEBI:57287"/>
        <dbReference type="ChEBI" id="CHEBI:57368"/>
        <dbReference type="ChEBI" id="CHEBI:74966"/>
        <dbReference type="ChEBI" id="CHEBI:74967"/>
    </reaction>
    <physiologicalReaction direction="left-to-right" evidence="2">
        <dbReference type="Rhea" id="RHEA:37484"/>
    </physiologicalReaction>
</comment>
<comment type="catalytic activity">
    <reaction evidence="4 5">
        <text>(5Z,8Z,11Z,14Z)-eicosatetraenoyl-CoA + 1-hexadecanoyl-sn-glycero-3-phosphocholine = 1-hexadecanoyl-2-(5Z,8Z,11Z,14Z-eicosatetraenoyl)-sn-glycero-3-phosphocholine + CoA</text>
        <dbReference type="Rhea" id="RHEA:35999"/>
        <dbReference type="ChEBI" id="CHEBI:57287"/>
        <dbReference type="ChEBI" id="CHEBI:57368"/>
        <dbReference type="ChEBI" id="CHEBI:72998"/>
        <dbReference type="ChEBI" id="CHEBI:73003"/>
    </reaction>
    <physiologicalReaction direction="left-to-right" evidence="9 10">
        <dbReference type="Rhea" id="RHEA:36000"/>
    </physiologicalReaction>
</comment>
<comment type="catalytic activity">
    <reaction evidence="2">
        <text>1-octadecanoyl-sn-glycero-3-phosphocholine + (5Z,8Z,11Z,14Z)-eicosatetraenoyl-CoA = 1-octadecanoyl-2-(5Z,8Z,11Z,14Z-eicosatetraenoyl)-sn-glycero-3-phosphocholine + CoA</text>
        <dbReference type="Rhea" id="RHEA:37479"/>
        <dbReference type="ChEBI" id="CHEBI:57287"/>
        <dbReference type="ChEBI" id="CHEBI:57368"/>
        <dbReference type="ChEBI" id="CHEBI:73858"/>
        <dbReference type="ChEBI" id="CHEBI:74965"/>
    </reaction>
    <physiologicalReaction direction="left-to-right" evidence="2">
        <dbReference type="Rhea" id="RHEA:37480"/>
    </physiologicalReaction>
</comment>
<comment type="catalytic activity">
    <reaction evidence="2">
        <text>1-eicosanoyl-sn-glycero-3-phosphocholine + (5Z,8Z,11Z,14Z)-eicosatetraenoyl-CoA = 1-eicosanoyl-2-(5Z,8Z,11Z,14Z)-eicosatetraenoyl-sn-glycero-3-phosphocholine + CoA</text>
        <dbReference type="Rhea" id="RHEA:37487"/>
        <dbReference type="ChEBI" id="CHEBI:57287"/>
        <dbReference type="ChEBI" id="CHEBI:57368"/>
        <dbReference type="ChEBI" id="CHEBI:74968"/>
        <dbReference type="ChEBI" id="CHEBI:74970"/>
    </reaction>
    <physiologicalReaction direction="left-to-right" evidence="2">
        <dbReference type="Rhea" id="RHEA:37488"/>
    </physiologicalReaction>
</comment>
<comment type="catalytic activity">
    <reaction evidence="5">
        <text>1-(9Z-octadecenoyl)-sn-glycero-3-phosphocholine + (9Z)-octadecenoyl-CoA = 1,2-di-(9Z-octadecenoyl)-sn-glycero-3-phosphocholine + CoA</text>
        <dbReference type="Rhea" id="RHEA:37387"/>
        <dbReference type="ChEBI" id="CHEBI:28610"/>
        <dbReference type="ChEBI" id="CHEBI:57287"/>
        <dbReference type="ChEBI" id="CHEBI:57387"/>
        <dbReference type="ChEBI" id="CHEBI:74669"/>
    </reaction>
    <physiologicalReaction direction="left-to-right" evidence="10">
        <dbReference type="Rhea" id="RHEA:37388"/>
    </physiologicalReaction>
</comment>
<comment type="catalytic activity">
    <reaction evidence="5">
        <text>1-(9Z-octadecenoyl)-sn-glycero-3-phosphocholine + (9Z,12Z)-octadecadienoyl-CoA = 1-(9Z)-octadecenoyl-2-(9Z,12Z)-octadecadienoyl-sn-glycero-3-phosphocholine + CoA</text>
        <dbReference type="Rhea" id="RHEA:37391"/>
        <dbReference type="ChEBI" id="CHEBI:28610"/>
        <dbReference type="ChEBI" id="CHEBI:57287"/>
        <dbReference type="ChEBI" id="CHEBI:57383"/>
        <dbReference type="ChEBI" id="CHEBI:74670"/>
    </reaction>
    <physiologicalReaction direction="left-to-right" evidence="10">
        <dbReference type="Rhea" id="RHEA:37392"/>
    </physiologicalReaction>
</comment>
<comment type="catalytic activity">
    <reaction evidence="5">
        <text>1-(9Z-octadecenoyl)-sn-glycero-3-phosphocholine + (5Z,8Z,11Z,14Z)-eicosatetraenoyl-CoA = 1-(9Z)-octadecenoyl-2-(5Z,8Z,11Z,14Z)-icosatetraenoyl-sn-glycero-3-phosphocholine + CoA</text>
        <dbReference type="Rhea" id="RHEA:37395"/>
        <dbReference type="ChEBI" id="CHEBI:28610"/>
        <dbReference type="ChEBI" id="CHEBI:57287"/>
        <dbReference type="ChEBI" id="CHEBI:57368"/>
        <dbReference type="ChEBI" id="CHEBI:74671"/>
    </reaction>
    <physiologicalReaction direction="left-to-right" evidence="10">
        <dbReference type="Rhea" id="RHEA:37396"/>
    </physiologicalReaction>
</comment>
<comment type="catalytic activity">
    <reaction evidence="6">
        <text>a 1-acyl-sn-glycero-3-phosphoethanolamine + (9Z,12Z)-octadecadienoyl-CoA = 1-acyl-2-(9Z,12Z)-octadecadienoyl-sn-glycero-3-phosphoethanolamine + CoA</text>
        <dbReference type="Rhea" id="RHEA:37579"/>
        <dbReference type="ChEBI" id="CHEBI:57287"/>
        <dbReference type="ChEBI" id="CHEBI:57383"/>
        <dbReference type="ChEBI" id="CHEBI:64381"/>
        <dbReference type="ChEBI" id="CHEBI:75069"/>
    </reaction>
    <physiologicalReaction direction="left-to-right" evidence="11">
        <dbReference type="Rhea" id="RHEA:37580"/>
    </physiologicalReaction>
</comment>
<comment type="catalytic activity">
    <reaction evidence="2">
        <text>1-(9Z-octadecenoyl)-sn-glycero-3-phosphoethanolamine + (9Z,12Z)-octadecadienoyl-CoA = 1-(9Z)-octadecenoyl-2-(9Z,12Z)-octadecadienoyl-sn-glycero-3-phosphoethanolamine + CoA</text>
        <dbReference type="Rhea" id="RHEA:37503"/>
        <dbReference type="ChEBI" id="CHEBI:57287"/>
        <dbReference type="ChEBI" id="CHEBI:57383"/>
        <dbReference type="ChEBI" id="CHEBI:74971"/>
        <dbReference type="ChEBI" id="CHEBI:74977"/>
    </reaction>
    <physiologicalReaction direction="left-to-right" evidence="2">
        <dbReference type="Rhea" id="RHEA:37504"/>
    </physiologicalReaction>
</comment>
<comment type="catalytic activity">
    <reaction evidence="2">
        <text>1-(10Z-heptadecenoyl)-sn-glycero-3-phosphoethanolamine + (9Z,12Z)-octadecadienoyl-CoA = 1-(10Z-heptadecenoyl)-2-(9Z,12Z-octadecadienoyl)-sn-glycero-3-phosphoethanolamine + CoA</text>
        <dbReference type="Rhea" id="RHEA:64228"/>
        <dbReference type="ChEBI" id="CHEBI:57287"/>
        <dbReference type="ChEBI" id="CHEBI:57383"/>
        <dbReference type="ChEBI" id="CHEBI:149768"/>
        <dbReference type="ChEBI" id="CHEBI:149770"/>
    </reaction>
    <physiologicalReaction direction="left-to-right" evidence="2">
        <dbReference type="Rhea" id="RHEA:64229"/>
    </physiologicalReaction>
</comment>
<comment type="catalytic activity">
    <reaction evidence="6">
        <text>a 1-acyl-sn-glycero-3-phosphoethanolamine + (5Z,8Z,11Z,14Z)-eicosatetraenoyl-CoA = 1-acyl-2-(5Z,8Z,11Z,14Z)-eicosatetraenoyl-sn-glycero-3-phosphoethanolamine + CoA</text>
        <dbReference type="Rhea" id="RHEA:37575"/>
        <dbReference type="ChEBI" id="CHEBI:57287"/>
        <dbReference type="ChEBI" id="CHEBI:57368"/>
        <dbReference type="ChEBI" id="CHEBI:64381"/>
        <dbReference type="ChEBI" id="CHEBI:75067"/>
    </reaction>
    <physiologicalReaction direction="left-to-right" evidence="11">
        <dbReference type="Rhea" id="RHEA:37576"/>
    </physiologicalReaction>
</comment>
<comment type="catalytic activity">
    <reaction evidence="5">
        <text>1-hexadecanoyl-sn-glycero-3-phosphoethanolamine + (5Z,8Z,11Z,14Z)-eicosatetraenoyl-CoA = 1-hexadecanoyl-2-(5Z,8Z,11Z,14Z-eicosatetraenoyl)-sn-glycero-3-phosphoethanolamine + CoA</text>
        <dbReference type="Rhea" id="RHEA:36023"/>
        <dbReference type="ChEBI" id="CHEBI:57287"/>
        <dbReference type="ChEBI" id="CHEBI:57368"/>
        <dbReference type="ChEBI" id="CHEBI:73004"/>
        <dbReference type="ChEBI" id="CHEBI:73009"/>
    </reaction>
    <physiologicalReaction direction="left-to-right" evidence="10">
        <dbReference type="Rhea" id="RHEA:36024"/>
    </physiologicalReaction>
</comment>
<comment type="catalytic activity">
    <reaction evidence="2">
        <text>1-(9Z-octadecenoyl)-sn-glycero-3-phosphoethanolamine + (5Z,8Z,11Z,14Z)-eicosatetraenoyl-CoA = 1-(9Z)-octadecenoyl-2-(5Z,8Z,11Z,14Z)-eicosatetraenoyl-sn-glycero-3-phosphoethanolamine + CoA</text>
        <dbReference type="Rhea" id="RHEA:37495"/>
        <dbReference type="ChEBI" id="CHEBI:57287"/>
        <dbReference type="ChEBI" id="CHEBI:57368"/>
        <dbReference type="ChEBI" id="CHEBI:74971"/>
        <dbReference type="ChEBI" id="CHEBI:74975"/>
    </reaction>
    <physiologicalReaction direction="left-to-right" evidence="2">
        <dbReference type="Rhea" id="RHEA:37496"/>
    </physiologicalReaction>
</comment>
<comment type="catalytic activity">
    <reaction evidence="2">
        <text>1-(10Z-heptadecenoyl)-sn-glycero-3-phosphoethanolamine + (5Z,8Z,11Z,14Z)-eicosatetraenoyl-CoA = 1-(10Z-heptadecenoyl)-2-(5Z,8Z,11Z,14Z-eicosatetraenoyl)-sn-glycero-3-phosphoethanolamine + CoA</text>
        <dbReference type="Rhea" id="RHEA:64204"/>
        <dbReference type="ChEBI" id="CHEBI:57287"/>
        <dbReference type="ChEBI" id="CHEBI:57368"/>
        <dbReference type="ChEBI" id="CHEBI:149768"/>
        <dbReference type="ChEBI" id="CHEBI:149769"/>
    </reaction>
    <physiologicalReaction direction="left-to-right" evidence="2">
        <dbReference type="Rhea" id="RHEA:64205"/>
    </physiologicalReaction>
</comment>
<comment type="catalytic activity">
    <reaction evidence="2">
        <text>a 1-O-(1Z-alkenyl)-sn-glycero-3-phosphoethanolamine + (5Z,8Z,11Z,14Z)-eicosatetraenoyl-CoA = 1-O-(1Z)-alkenyl-2-(5Z,8Z,11Z,14Z)-eicosatetraenoyl-sn-glycero-3-phosphoethanolamine + CoA</text>
        <dbReference type="Rhea" id="RHEA:37635"/>
        <dbReference type="ChEBI" id="CHEBI:57287"/>
        <dbReference type="ChEBI" id="CHEBI:57368"/>
        <dbReference type="ChEBI" id="CHEBI:77288"/>
        <dbReference type="ChEBI" id="CHEBI:77295"/>
    </reaction>
    <physiologicalReaction direction="left-to-right" evidence="2">
        <dbReference type="Rhea" id="RHEA:37636"/>
    </physiologicalReaction>
</comment>
<comment type="catalytic activity">
    <reaction evidence="6">
        <text>a 1-acyl-sn-glycero-3-phospho-L-serine + (9Z,12Z)-octadecadienoyl-CoA = 1-acyl-2-(9Z,12Z-octadecadienoyl)-sn-glycero-3-phospho-L-serine + CoA</text>
        <dbReference type="Rhea" id="RHEA:37567"/>
        <dbReference type="ChEBI" id="CHEBI:57287"/>
        <dbReference type="ChEBI" id="CHEBI:57383"/>
        <dbReference type="ChEBI" id="CHEBI:64379"/>
        <dbReference type="ChEBI" id="CHEBI:75066"/>
    </reaction>
    <physiologicalReaction direction="left-to-right" evidence="11">
        <dbReference type="Rhea" id="RHEA:37568"/>
    </physiologicalReaction>
</comment>
<comment type="catalytic activity">
    <reaction evidence="6">
        <text>a 1-acyl-sn-glycero-3-phospho-L-serine + (5Z,8Z,11Z,14Z)-eicosatetraenoyl-CoA = 1-acyl-2-(5Z,8Z,11Z,14Z-eicosatetraenoyl)-sn-glycero-3-phospho-L-serine + CoA</text>
        <dbReference type="Rhea" id="RHEA:37571"/>
        <dbReference type="ChEBI" id="CHEBI:57287"/>
        <dbReference type="ChEBI" id="CHEBI:57368"/>
        <dbReference type="ChEBI" id="CHEBI:64379"/>
        <dbReference type="ChEBI" id="CHEBI:75065"/>
    </reaction>
    <physiologicalReaction direction="left-to-right" evidence="11">
        <dbReference type="Rhea" id="RHEA:37572"/>
    </physiologicalReaction>
</comment>
<comment type="catalytic activity">
    <reaction evidence="4">
        <text>1-hexadecanoyl-sn-glycero-3-phospho-L-serine + (9Z)-octadecenoyl-CoA = 1-hexadecanoyl-2-(9Z-octadecenoyl)-sn-glycero-3-phospho-L-serine + CoA</text>
        <dbReference type="Rhea" id="RHEA:37531"/>
        <dbReference type="ChEBI" id="CHEBI:57287"/>
        <dbReference type="ChEBI" id="CHEBI:57387"/>
        <dbReference type="ChEBI" id="CHEBI:75020"/>
        <dbReference type="ChEBI" id="CHEBI:75029"/>
    </reaction>
    <physiologicalReaction direction="left-to-right" evidence="9">
        <dbReference type="Rhea" id="RHEA:37532"/>
    </physiologicalReaction>
</comment>
<comment type="catalytic activity">
    <reaction evidence="2">
        <text>1-(9Z-octadecenoyl)-sn-glycero-3-phospho-L-serine + (9Z)-octadecenoyl-CoA = 1,2-di-(9Z)-octadecenoyl-sn-glycero-3-phospho-L-serine + CoA</text>
        <dbReference type="Rhea" id="RHEA:37407"/>
        <dbReference type="ChEBI" id="CHEBI:57287"/>
        <dbReference type="ChEBI" id="CHEBI:57387"/>
        <dbReference type="ChEBI" id="CHEBI:74617"/>
        <dbReference type="ChEBI" id="CHEBI:74905"/>
    </reaction>
    <physiologicalReaction direction="left-to-right" evidence="2">
        <dbReference type="Rhea" id="RHEA:37408"/>
    </physiologicalReaction>
</comment>
<comment type="catalytic activity">
    <reaction evidence="4">
        <text>1-hexadecanoyl-sn-glycero-3-phospho-L-serine + (9Z,12Z)-octadecadienoyl-CoA = 1-hexadecanoyl-2-(9Z,12Z-octadecadienoyl)-sn-glycero-3-phospho-L-serine + CoA</text>
        <dbReference type="Rhea" id="RHEA:37535"/>
        <dbReference type="ChEBI" id="CHEBI:57287"/>
        <dbReference type="ChEBI" id="CHEBI:57383"/>
        <dbReference type="ChEBI" id="CHEBI:75020"/>
        <dbReference type="ChEBI" id="CHEBI:75031"/>
    </reaction>
    <physiologicalReaction direction="left-to-right" evidence="9">
        <dbReference type="Rhea" id="RHEA:37536"/>
    </physiologicalReaction>
</comment>
<comment type="catalytic activity">
    <reaction evidence="5">
        <text>1-(9Z-octadecenoyl)-sn-glycero-3-phospho-L-serine + (9Z,12Z)-octadecadienoyl-CoA = 1-(9Z-octadecenoyl)-2-(9Z,12Z-octadienoyl)-sn-glycero-3-phospho-L-serine + CoA</text>
        <dbReference type="Rhea" id="RHEA:37375"/>
        <dbReference type="ChEBI" id="CHEBI:57287"/>
        <dbReference type="ChEBI" id="CHEBI:57383"/>
        <dbReference type="ChEBI" id="CHEBI:74617"/>
        <dbReference type="ChEBI" id="CHEBI:74892"/>
    </reaction>
    <physiologicalReaction direction="left-to-right" evidence="10">
        <dbReference type="Rhea" id="RHEA:37376"/>
    </physiologicalReaction>
</comment>
<comment type="catalytic activity">
    <reaction evidence="4">
        <text>1-hexadecanoyl-sn-glycero-3-phospho-L-serine + (5Z,8Z,11Z,14Z)-eicosatetraenoyl-CoA = 1-hexadecanoyl-2-(5Z,8Z,11Z,14Z-eicosatetraenoyl)-sn-glycero-3-phospho-L-serine + CoA</text>
        <dbReference type="Rhea" id="RHEA:37539"/>
        <dbReference type="ChEBI" id="CHEBI:57287"/>
        <dbReference type="ChEBI" id="CHEBI:57368"/>
        <dbReference type="ChEBI" id="CHEBI:75020"/>
        <dbReference type="ChEBI" id="CHEBI:75032"/>
    </reaction>
    <physiologicalReaction direction="left-to-right" evidence="9">
        <dbReference type="Rhea" id="RHEA:37540"/>
    </physiologicalReaction>
</comment>
<comment type="catalytic activity">
    <reaction evidence="5">
        <text>1-(9Z-octadecenoyl)-sn-glycero-3-phospho-L-serine + (5Z,8Z,11Z,14Z)-eicosatetraenoyl-CoA = 1-(9Z-octadecenoyl)-2-(5Z,8Z,11Z,14Z-eicosatetraenoyl)-sn-glycero-3-phospho-L-serine + CoA</text>
        <dbReference type="Rhea" id="RHEA:37379"/>
        <dbReference type="ChEBI" id="CHEBI:57287"/>
        <dbReference type="ChEBI" id="CHEBI:57368"/>
        <dbReference type="ChEBI" id="CHEBI:74617"/>
        <dbReference type="ChEBI" id="CHEBI:74897"/>
    </reaction>
    <physiologicalReaction direction="left-to-right" evidence="10">
        <dbReference type="Rhea" id="RHEA:37380"/>
    </physiologicalReaction>
</comment>
<comment type="activity regulation">
    <text evidence="5">Activity is inhibited by thimerosal.</text>
</comment>
<comment type="biophysicochemical properties">
    <kinetics>
        <KM evidence="4">41.29 uM for palmitoyl-CoA</KM>
        <KM evidence="4">36.65 uM for stearoyl-CoA</KM>
        <KM evidence="4">72.68 uM for oleoyl-CoA</KM>
        <KM evidence="4">201.4 uM for linoleoyl-CoA</KM>
        <KM evidence="4">71.56 uM for arachidonoyl-CoA</KM>
        <KM evidence="4">72.19 uM for 1-palmitoyl-lysophosphatidylcholine</KM>
        <Vmax evidence="4">1782.0 nmol/min/mg enzyme with palmitoyl-CoA and 1-palmitoyl-lysophosphatidylcholine as substrates</Vmax>
        <Vmax evidence="4">996.0 nmol/min/mg enzyme with stearoyl-CoA and 1-palmitoyl-lysophosphatidylcholine as substrates</Vmax>
        <Vmax evidence="4">4698.0 nmol/min/mg enzyme with oleoyl-CoA and 1-palmitoyl-lysophosphatidylcholine as substrates</Vmax>
        <Vmax evidence="4">18148.0 nmol/min/mg enzyme with linoleoyl-CoA and 1-palmitoyl-lysophosphatidylcholine as substrates</Vmax>
        <Vmax evidence="4">6247.0 nmol/min/mg enzyme with arachidonoyl-CoA and 1-palmitoyl-lysophosphatidylcholine as substrates</Vmax>
    </kinetics>
</comment>
<comment type="pathway">
    <text evidence="4">Lipid metabolism; phospholipid metabolism.</text>
</comment>
<comment type="subcellular location">
    <subcellularLocation>
        <location evidence="4">Endoplasmic reticulum membrane</location>
        <topology evidence="3">Multi-pass membrane protein</topology>
    </subcellularLocation>
</comment>
<comment type="alternative products">
    <event type="alternative splicing"/>
    <isoform>
        <id>Q6P1A2-1</id>
        <name>1</name>
        <sequence type="displayed"/>
    </isoform>
    <isoform>
        <id>Q6P1A2-2</id>
        <name>2</name>
        <sequence type="described" ref="VSP_053680"/>
    </isoform>
</comment>
<comment type="tissue specificity">
    <text evidence="4 5">Highly expressed in liver, pancreas and adipose tissue. Very low expression in skeletal muscle and heart. Detected in neutrophils.</text>
</comment>
<comment type="domain">
    <text>The di-lysine motif confers endoplasmic reticulum localization.</text>
</comment>
<comment type="similarity">
    <text evidence="3">Belongs to the membrane-bound acyltransferase family.</text>
</comment>
<comment type="sequence caution" evidence="8">
    <conflict type="erroneous initiation">
        <sequence resource="EMBL-CDS" id="AAB51326"/>
    </conflict>
    <text>Truncated N-terminus.</text>
</comment>
<comment type="sequence caution" evidence="8">
    <conflict type="erroneous initiation">
        <sequence resource="EMBL-CDS" id="AAC51640"/>
    </conflict>
    <text>Truncated N-terminus.</text>
</comment>
<comment type="sequence caution" evidence="8">
    <conflict type="erroneous initiation">
        <sequence resource="EMBL-CDS" id="BAG37917"/>
    </conflict>
    <text>Truncated N-terminus.</text>
</comment>
<dbReference type="EC" id="2.3.1.-" evidence="4 5 6"/>
<dbReference type="EC" id="2.3.1.23" evidence="4 5 6"/>
<dbReference type="EC" id="2.3.1.n7" evidence="5 6"/>
<dbReference type="EC" id="2.3.1.n6" evidence="4 5 6"/>
<dbReference type="EMBL" id="BX648009">
    <property type="status" value="NOT_ANNOTATED_CDS"/>
    <property type="molecule type" value="mRNA"/>
</dbReference>
<dbReference type="EMBL" id="AK296145">
    <property type="protein sequence ID" value="BAH12269.1"/>
    <property type="molecule type" value="mRNA"/>
</dbReference>
<dbReference type="EMBL" id="AK315538">
    <property type="protein sequence ID" value="BAG37917.1"/>
    <property type="status" value="ALT_INIT"/>
    <property type="molecule type" value="mRNA"/>
</dbReference>
<dbReference type="EMBL" id="AC006512">
    <property type="status" value="NOT_ANNOTATED_CDS"/>
    <property type="molecule type" value="Genomic_DNA"/>
</dbReference>
<dbReference type="EMBL" id="BC000664">
    <property type="protein sequence ID" value="AAH00664.2"/>
    <property type="molecule type" value="mRNA"/>
</dbReference>
<dbReference type="EMBL" id="BC065194">
    <property type="protein sequence ID" value="AAH65194.1"/>
    <property type="molecule type" value="mRNA"/>
</dbReference>
<dbReference type="EMBL" id="U47924">
    <property type="protein sequence ID" value="AAB51326.1"/>
    <property type="status" value="ALT_INIT"/>
    <property type="molecule type" value="Genomic_DNA"/>
</dbReference>
<dbReference type="EMBL" id="U72515">
    <property type="protein sequence ID" value="AAC51640.1"/>
    <property type="status" value="ALT_INIT"/>
    <property type="molecule type" value="mRNA"/>
</dbReference>
<dbReference type="EMBL" id="BT007000">
    <property type="protein sequence ID" value="AAP35646.1"/>
    <property type="molecule type" value="mRNA"/>
</dbReference>
<dbReference type="CCDS" id="CCDS8572.1">
    <molecule id="Q6P1A2-1"/>
</dbReference>
<dbReference type="RefSeq" id="NP_005759.4">
    <molecule id="Q6P1A2-1"/>
    <property type="nucleotide sequence ID" value="NM_005768.5"/>
</dbReference>
<dbReference type="SMR" id="Q6P1A2"/>
<dbReference type="BioGRID" id="115464">
    <property type="interactions" value="93"/>
</dbReference>
<dbReference type="FunCoup" id="Q6P1A2">
    <property type="interactions" value="1153"/>
</dbReference>
<dbReference type="IntAct" id="Q6P1A2">
    <property type="interactions" value="60"/>
</dbReference>
<dbReference type="MINT" id="Q6P1A2"/>
<dbReference type="STRING" id="9606.ENSP00000261407"/>
<dbReference type="SwissLipids" id="SLP:000000127"/>
<dbReference type="GlyGen" id="Q6P1A2">
    <property type="glycosylation" value="1 site, 1 O-linked glycan (1 site)"/>
</dbReference>
<dbReference type="iPTMnet" id="Q6P1A2"/>
<dbReference type="PhosphoSitePlus" id="Q6P1A2"/>
<dbReference type="SwissPalm" id="Q6P1A2"/>
<dbReference type="BioMuta" id="LPCAT3"/>
<dbReference type="DMDM" id="74737127"/>
<dbReference type="jPOST" id="Q6P1A2"/>
<dbReference type="MassIVE" id="Q6P1A2"/>
<dbReference type="PaxDb" id="9606-ENSP00000261407"/>
<dbReference type="PeptideAtlas" id="Q6P1A2"/>
<dbReference type="ProteomicsDB" id="6534"/>
<dbReference type="ProteomicsDB" id="66828">
    <molecule id="Q6P1A2-1"/>
</dbReference>
<dbReference type="Pumba" id="Q6P1A2"/>
<dbReference type="Antibodypedia" id="67641">
    <property type="antibodies" value="74 antibodies from 12 providers"/>
</dbReference>
<dbReference type="DNASU" id="10162"/>
<dbReference type="Ensembl" id="ENST00000261407.9">
    <molecule id="Q6P1A2-1"/>
    <property type="protein sequence ID" value="ENSP00000261407.4"/>
    <property type="gene ID" value="ENSG00000111684.11"/>
</dbReference>
<dbReference type="GeneID" id="10162"/>
<dbReference type="KEGG" id="hsa:10162"/>
<dbReference type="MANE-Select" id="ENST00000261407.9">
    <property type="protein sequence ID" value="ENSP00000261407.4"/>
    <property type="RefSeq nucleotide sequence ID" value="NM_005768.6"/>
    <property type="RefSeq protein sequence ID" value="NP_005759.4"/>
</dbReference>
<dbReference type="UCSC" id="uc001qsi.4">
    <molecule id="Q6P1A2-1"/>
    <property type="organism name" value="human"/>
</dbReference>
<dbReference type="AGR" id="HGNC:30244"/>
<dbReference type="CTD" id="10162"/>
<dbReference type="DisGeNET" id="10162"/>
<dbReference type="GeneCards" id="LPCAT3"/>
<dbReference type="HGNC" id="HGNC:30244">
    <property type="gene designation" value="LPCAT3"/>
</dbReference>
<dbReference type="HPA" id="ENSG00000111684">
    <property type="expression patterns" value="Low tissue specificity"/>
</dbReference>
<dbReference type="MIM" id="611950">
    <property type="type" value="gene"/>
</dbReference>
<dbReference type="neXtProt" id="NX_Q6P1A2"/>
<dbReference type="OpenTargets" id="ENSG00000111684"/>
<dbReference type="PharmGKB" id="PA162394266"/>
<dbReference type="VEuPathDB" id="HostDB:ENSG00000111684"/>
<dbReference type="eggNOG" id="KOG2705">
    <property type="taxonomic scope" value="Eukaryota"/>
</dbReference>
<dbReference type="GeneTree" id="ENSGT01030000234564"/>
<dbReference type="HOGENOM" id="CLU_011340_6_1_1"/>
<dbReference type="InParanoid" id="Q6P1A2"/>
<dbReference type="OMA" id="NAWVSRY"/>
<dbReference type="OrthoDB" id="5974730at2759"/>
<dbReference type="PAN-GO" id="Q6P1A2">
    <property type="GO annotations" value="5 GO annotations based on evolutionary models"/>
</dbReference>
<dbReference type="PhylomeDB" id="Q6P1A2"/>
<dbReference type="TreeFam" id="TF106143"/>
<dbReference type="BRENDA" id="2.3.1.23">
    <property type="organism ID" value="2681"/>
</dbReference>
<dbReference type="PathwayCommons" id="Q6P1A2"/>
<dbReference type="Reactome" id="R-HSA-1482788">
    <property type="pathway name" value="Acyl chain remodelling of PC"/>
</dbReference>
<dbReference type="Reactome" id="R-HSA-1482801">
    <property type="pathway name" value="Acyl chain remodelling of PS"/>
</dbReference>
<dbReference type="Reactome" id="R-HSA-1482839">
    <property type="pathway name" value="Acyl chain remodelling of PE"/>
</dbReference>
<dbReference type="SABIO-RK" id="Q6P1A2"/>
<dbReference type="SignaLink" id="Q6P1A2"/>
<dbReference type="UniPathway" id="UPA00085"/>
<dbReference type="BioGRID-ORCS" id="10162">
    <property type="hits" value="55 hits in 1166 CRISPR screens"/>
</dbReference>
<dbReference type="ChiTaRS" id="LPCAT3">
    <property type="organism name" value="human"/>
</dbReference>
<dbReference type="GeneWiki" id="MBOAT5"/>
<dbReference type="GenomeRNAi" id="10162"/>
<dbReference type="Pharos" id="Q6P1A2">
    <property type="development level" value="Tbio"/>
</dbReference>
<dbReference type="PRO" id="PR:Q6P1A2"/>
<dbReference type="Proteomes" id="UP000005640">
    <property type="component" value="Chromosome 12"/>
</dbReference>
<dbReference type="RNAct" id="Q6P1A2">
    <property type="molecule type" value="protein"/>
</dbReference>
<dbReference type="Bgee" id="ENSG00000111684">
    <property type="expression patterns" value="Expressed in right lobe of liver and 172 other cell types or tissues"/>
</dbReference>
<dbReference type="ExpressionAtlas" id="Q6P1A2">
    <property type="expression patterns" value="baseline and differential"/>
</dbReference>
<dbReference type="GO" id="GO:0005789">
    <property type="term" value="C:endoplasmic reticulum membrane"/>
    <property type="evidence" value="ECO:0000314"/>
    <property type="project" value="UniProtKB"/>
</dbReference>
<dbReference type="GO" id="GO:0016020">
    <property type="term" value="C:membrane"/>
    <property type="evidence" value="ECO:0007005"/>
    <property type="project" value="UniProtKB"/>
</dbReference>
<dbReference type="GO" id="GO:0003841">
    <property type="term" value="F:1-acylglycerol-3-phosphate O-acyltransferase activity"/>
    <property type="evidence" value="ECO:0000304"/>
    <property type="project" value="Reactome"/>
</dbReference>
<dbReference type="GO" id="GO:0047184">
    <property type="term" value="F:1-acylglycerophosphocholine O-acyltransferase activity"/>
    <property type="evidence" value="ECO:0000314"/>
    <property type="project" value="UniProtKB"/>
</dbReference>
<dbReference type="GO" id="GO:0106262">
    <property type="term" value="F:1-acylglycerophosphoethanolamine O-acyltransferase activity"/>
    <property type="evidence" value="ECO:0000314"/>
    <property type="project" value="UniProtKB"/>
</dbReference>
<dbReference type="GO" id="GO:0106263">
    <property type="term" value="F:1-acylglycerophosphoserine O-acyltransferase activity"/>
    <property type="evidence" value="ECO:0000314"/>
    <property type="project" value="UniProtKB"/>
</dbReference>
<dbReference type="GO" id="GO:0047144">
    <property type="term" value="F:2-acylglycerol-3-phosphate O-acyltransferase activity"/>
    <property type="evidence" value="ECO:0000304"/>
    <property type="project" value="Reactome"/>
</dbReference>
<dbReference type="GO" id="GO:0071617">
    <property type="term" value="F:lysophospholipid acyltransferase activity"/>
    <property type="evidence" value="ECO:0000318"/>
    <property type="project" value="GO_Central"/>
</dbReference>
<dbReference type="GO" id="GO:0034378">
    <property type="term" value="P:chylomicron assembly"/>
    <property type="evidence" value="ECO:0000250"/>
    <property type="project" value="UniProtKB"/>
</dbReference>
<dbReference type="GO" id="GO:0090158">
    <property type="term" value="P:endoplasmic reticulum membrane organization"/>
    <property type="evidence" value="ECO:0000250"/>
    <property type="project" value="UniProtKB"/>
</dbReference>
<dbReference type="GO" id="GO:0036335">
    <property type="term" value="P:intestinal stem cell homeostasis"/>
    <property type="evidence" value="ECO:0000250"/>
    <property type="project" value="UniProtKB"/>
</dbReference>
<dbReference type="GO" id="GO:0030258">
    <property type="term" value="P:lipid modification"/>
    <property type="evidence" value="ECO:0000318"/>
    <property type="project" value="GO_Central"/>
</dbReference>
<dbReference type="GO" id="GO:0050728">
    <property type="term" value="P:negative regulation of inflammatory response"/>
    <property type="evidence" value="ECO:0000250"/>
    <property type="project" value="UniProtKB"/>
</dbReference>
<dbReference type="GO" id="GO:1903573">
    <property type="term" value="P:negative regulation of response to endoplasmic reticulum stress"/>
    <property type="evidence" value="ECO:0000250"/>
    <property type="project" value="UniProtKB"/>
</dbReference>
<dbReference type="GO" id="GO:0036151">
    <property type="term" value="P:phosphatidylcholine acyl-chain remodeling"/>
    <property type="evidence" value="ECO:0000314"/>
    <property type="project" value="UniProtKB"/>
</dbReference>
<dbReference type="GO" id="GO:0006656">
    <property type="term" value="P:phosphatidylcholine biosynthetic process"/>
    <property type="evidence" value="ECO:0000318"/>
    <property type="project" value="GO_Central"/>
</dbReference>
<dbReference type="GO" id="GO:0036152">
    <property type="term" value="P:phosphatidylethanolamine acyl-chain remodeling"/>
    <property type="evidence" value="ECO:0000314"/>
    <property type="project" value="UniProtKB"/>
</dbReference>
<dbReference type="GO" id="GO:0036150">
    <property type="term" value="P:phosphatidylserine acyl-chain remodeling"/>
    <property type="evidence" value="ECO:0000314"/>
    <property type="project" value="UniProtKB"/>
</dbReference>
<dbReference type="GO" id="GO:0045797">
    <property type="term" value="P:positive regulation of intestinal cholesterol absorption"/>
    <property type="evidence" value="ECO:0000250"/>
    <property type="project" value="UniProtKB"/>
</dbReference>
<dbReference type="GO" id="GO:1905885">
    <property type="term" value="P:positive regulation of triglyceride transport"/>
    <property type="evidence" value="ECO:0000250"/>
    <property type="project" value="UniProtKB"/>
</dbReference>
<dbReference type="GO" id="GO:0045540">
    <property type="term" value="P:regulation of cholesterol biosynthetic process"/>
    <property type="evidence" value="ECO:0000250"/>
    <property type="project" value="UniProtKB"/>
</dbReference>
<dbReference type="GO" id="GO:0034379">
    <property type="term" value="P:very-low-density lipoprotein particle assembly"/>
    <property type="evidence" value="ECO:0000250"/>
    <property type="project" value="UniProtKB"/>
</dbReference>
<dbReference type="InterPro" id="IPR049941">
    <property type="entry name" value="LPLAT_7/PORCN-like"/>
</dbReference>
<dbReference type="InterPro" id="IPR004299">
    <property type="entry name" value="MBOAT_fam"/>
</dbReference>
<dbReference type="PANTHER" id="PTHR13906:SF14">
    <property type="entry name" value="LYSOPHOSPHOLIPID ACYLTRANSFERASE 5"/>
    <property type="match status" value="1"/>
</dbReference>
<dbReference type="PANTHER" id="PTHR13906">
    <property type="entry name" value="PORCUPINE"/>
    <property type="match status" value="1"/>
</dbReference>
<dbReference type="Pfam" id="PF03062">
    <property type="entry name" value="MBOAT"/>
    <property type="match status" value="1"/>
</dbReference>
<feature type="initiator methionine" description="Removed" evidence="16">
    <location>
        <position position="1"/>
    </location>
</feature>
<feature type="chain" id="PRO_0000233382" description="Lysophospholipid acyltransferase 5">
    <location>
        <begin position="2"/>
        <end position="487"/>
    </location>
</feature>
<feature type="transmembrane region" description="Helical" evidence="3">
    <location>
        <begin position="44"/>
        <end position="64"/>
    </location>
</feature>
<feature type="transmembrane region" description="Helical" evidence="3">
    <location>
        <begin position="84"/>
        <end position="104"/>
    </location>
</feature>
<feature type="transmembrane region" description="Helical" evidence="3">
    <location>
        <begin position="111"/>
        <end position="131"/>
    </location>
</feature>
<feature type="transmembrane region" description="Helical" evidence="3">
    <location>
        <begin position="180"/>
        <end position="200"/>
    </location>
</feature>
<feature type="transmembrane region" description="Helical" evidence="3">
    <location>
        <begin position="227"/>
        <end position="247"/>
    </location>
</feature>
<feature type="transmembrane region" description="Helical" evidence="3">
    <location>
        <begin position="285"/>
        <end position="305"/>
    </location>
</feature>
<feature type="transmembrane region" description="Helical" evidence="3">
    <location>
        <begin position="364"/>
        <end position="384"/>
    </location>
</feature>
<feature type="transmembrane region" description="Helical" evidence="3">
    <location>
        <begin position="422"/>
        <end position="442"/>
    </location>
</feature>
<feature type="transmembrane region" description="Helical" evidence="3">
    <location>
        <begin position="453"/>
        <end position="473"/>
    </location>
</feature>
<feature type="short sequence motif" description="Di-lysine motif">
    <location>
        <begin position="484"/>
        <end position="487"/>
    </location>
</feature>
<feature type="active site" evidence="1">
    <location>
        <position position="338"/>
    </location>
</feature>
<feature type="active site" evidence="1">
    <location>
        <position position="374"/>
    </location>
</feature>
<feature type="modified residue" description="N-acetylalanine" evidence="16">
    <location>
        <position position="2"/>
    </location>
</feature>
<feature type="splice variant" id="VSP_053680" description="In isoform 2." evidence="7">
    <location>
        <begin position="21"/>
        <end position="100"/>
    </location>
</feature>
<feature type="sequence variant" id="VAR_050027" description="In dbSNP:rs34196984.">
    <original>F</original>
    <variation>L</variation>
    <location>
        <position position="63"/>
    </location>
</feature>
<feature type="sequence variant" id="VAR_050028" description="In dbSNP:rs1984564.">
    <original>I</original>
    <variation>T</variation>
    <location>
        <position position="217"/>
    </location>
</feature>
<feature type="sequence conflict" description="In Ref. 4; AAH00664 and 6; AAP35646." evidence="8" ref="4 6">
    <original>E</original>
    <variation>K</variation>
    <location>
        <position position="387"/>
    </location>
</feature>